<evidence type="ECO:0000255" key="1">
    <source>
        <dbReference type="HAMAP-Rule" id="MF_00185"/>
    </source>
</evidence>
<sequence>MSDVSKASLPKAIFLMGPTASGKTALAIELRKVLPVELISVDSALIYQGMDVGTAKPNAEELHAAPHRLLDILDPAQAYSAADFRRDALAEMAEITAAGRIPLLVGGTMLYFKALLEGLSPLPSADPEVRAKIEQQAAEQGWSALHKQLEEVDPVAAARIHPNDPQRLSRALEVFFISGKTLTELTQTSGEALPYQVHQFAIAPASRELLHQRIEQRFHQMLASGFEAEVRALFARGDLHTDMPSIRCVGYRQIWSYIEGEISYDEMVYRGVCATRQLAKRQITWLRGWEGIHWLDSEKPEQSYNEVLQVVGAIAD</sequence>
<protein>
    <recommendedName>
        <fullName evidence="1">tRNA dimethylallyltransferase</fullName>
        <ecNumber evidence="1">2.5.1.75</ecNumber>
    </recommendedName>
    <alternativeName>
        <fullName evidence="1">Dimethylallyl diphosphate:tRNA dimethylallyltransferase</fullName>
        <shortName evidence="1">DMAPP:tRNA dimethylallyltransferase</shortName>
        <shortName evidence="1">DMATase</shortName>
    </alternativeName>
    <alternativeName>
        <fullName evidence="1">Isopentenyl-diphosphate:tRNA isopentenyltransferase</fullName>
        <shortName evidence="1">IPP transferase</shortName>
        <shortName evidence="1">IPPT</shortName>
        <shortName evidence="1">IPTase</shortName>
    </alternativeName>
</protein>
<accession>A4W5R2</accession>
<name>MIAA_ENT38</name>
<reference key="1">
    <citation type="journal article" date="2010" name="PLoS Genet.">
        <title>Genome sequence of the plant growth promoting endophytic bacterium Enterobacter sp. 638.</title>
        <authorList>
            <person name="Taghavi S."/>
            <person name="van der Lelie D."/>
            <person name="Hoffman A."/>
            <person name="Zhang Y.B."/>
            <person name="Walla M.D."/>
            <person name="Vangronsveld J."/>
            <person name="Newman L."/>
            <person name="Monchy S."/>
        </authorList>
    </citation>
    <scope>NUCLEOTIDE SEQUENCE [LARGE SCALE GENOMIC DNA]</scope>
    <source>
        <strain>638</strain>
    </source>
</reference>
<feature type="chain" id="PRO_1000058434" description="tRNA dimethylallyltransferase">
    <location>
        <begin position="1"/>
        <end position="316"/>
    </location>
</feature>
<feature type="region of interest" description="Interaction with substrate tRNA" evidence="1">
    <location>
        <begin position="42"/>
        <end position="45"/>
    </location>
</feature>
<feature type="region of interest" description="Interaction with substrate tRNA" evidence="1">
    <location>
        <begin position="166"/>
        <end position="170"/>
    </location>
</feature>
<feature type="region of interest" description="Interaction with substrate tRNA" evidence="1">
    <location>
        <begin position="247"/>
        <end position="252"/>
    </location>
</feature>
<feature type="region of interest" description="Interaction with substrate tRNA" evidence="1">
    <location>
        <begin position="280"/>
        <end position="287"/>
    </location>
</feature>
<feature type="binding site" evidence="1">
    <location>
        <begin position="17"/>
        <end position="24"/>
    </location>
    <ligand>
        <name>ATP</name>
        <dbReference type="ChEBI" id="CHEBI:30616"/>
    </ligand>
</feature>
<feature type="binding site" evidence="1">
    <location>
        <begin position="19"/>
        <end position="24"/>
    </location>
    <ligand>
        <name>substrate</name>
    </ligand>
</feature>
<feature type="site" description="Interaction with substrate tRNA" evidence="1">
    <location>
        <position position="108"/>
    </location>
</feature>
<feature type="site" description="Interaction with substrate tRNA" evidence="1">
    <location>
        <position position="130"/>
    </location>
</feature>
<keyword id="KW-0067">ATP-binding</keyword>
<keyword id="KW-0460">Magnesium</keyword>
<keyword id="KW-0547">Nucleotide-binding</keyword>
<keyword id="KW-0808">Transferase</keyword>
<keyword id="KW-0819">tRNA processing</keyword>
<organism>
    <name type="scientific">Enterobacter sp. (strain 638)</name>
    <dbReference type="NCBI Taxonomy" id="399742"/>
    <lineage>
        <taxon>Bacteria</taxon>
        <taxon>Pseudomonadati</taxon>
        <taxon>Pseudomonadota</taxon>
        <taxon>Gammaproteobacteria</taxon>
        <taxon>Enterobacterales</taxon>
        <taxon>Enterobacteriaceae</taxon>
        <taxon>Enterobacter</taxon>
    </lineage>
</organism>
<dbReference type="EC" id="2.5.1.75" evidence="1"/>
<dbReference type="EMBL" id="CP000653">
    <property type="protein sequence ID" value="ABP59042.1"/>
    <property type="molecule type" value="Genomic_DNA"/>
</dbReference>
<dbReference type="RefSeq" id="WP_011915615.1">
    <property type="nucleotide sequence ID" value="NC_009436.1"/>
</dbReference>
<dbReference type="SMR" id="A4W5R2"/>
<dbReference type="STRING" id="399742.Ent638_0354"/>
<dbReference type="KEGG" id="ent:Ent638_0354"/>
<dbReference type="eggNOG" id="COG0324">
    <property type="taxonomic scope" value="Bacteria"/>
</dbReference>
<dbReference type="HOGENOM" id="CLU_032616_0_0_6"/>
<dbReference type="OrthoDB" id="9776390at2"/>
<dbReference type="Proteomes" id="UP000000230">
    <property type="component" value="Chromosome"/>
</dbReference>
<dbReference type="GO" id="GO:0005524">
    <property type="term" value="F:ATP binding"/>
    <property type="evidence" value="ECO:0007669"/>
    <property type="project" value="UniProtKB-UniRule"/>
</dbReference>
<dbReference type="GO" id="GO:0052381">
    <property type="term" value="F:tRNA dimethylallyltransferase activity"/>
    <property type="evidence" value="ECO:0007669"/>
    <property type="project" value="UniProtKB-UniRule"/>
</dbReference>
<dbReference type="GO" id="GO:0006400">
    <property type="term" value="P:tRNA modification"/>
    <property type="evidence" value="ECO:0007669"/>
    <property type="project" value="TreeGrafter"/>
</dbReference>
<dbReference type="FunFam" id="1.10.20.140:FF:000001">
    <property type="entry name" value="tRNA dimethylallyltransferase"/>
    <property type="match status" value="1"/>
</dbReference>
<dbReference type="FunFam" id="1.10.287.890:FF:000001">
    <property type="entry name" value="tRNA dimethylallyltransferase"/>
    <property type="match status" value="1"/>
</dbReference>
<dbReference type="Gene3D" id="1.10.20.140">
    <property type="match status" value="1"/>
</dbReference>
<dbReference type="Gene3D" id="1.10.287.890">
    <property type="entry name" value="Crystal structure of tRNA isopentenylpyrophosphate transferase (bh2366) domain"/>
    <property type="match status" value="1"/>
</dbReference>
<dbReference type="Gene3D" id="3.40.50.300">
    <property type="entry name" value="P-loop containing nucleotide triphosphate hydrolases"/>
    <property type="match status" value="1"/>
</dbReference>
<dbReference type="HAMAP" id="MF_00185">
    <property type="entry name" value="IPP_trans"/>
    <property type="match status" value="1"/>
</dbReference>
<dbReference type="InterPro" id="IPR039657">
    <property type="entry name" value="Dimethylallyltransferase"/>
</dbReference>
<dbReference type="InterPro" id="IPR018022">
    <property type="entry name" value="IPT"/>
</dbReference>
<dbReference type="InterPro" id="IPR027417">
    <property type="entry name" value="P-loop_NTPase"/>
</dbReference>
<dbReference type="NCBIfam" id="TIGR00174">
    <property type="entry name" value="miaA"/>
    <property type="match status" value="1"/>
</dbReference>
<dbReference type="PANTHER" id="PTHR11088">
    <property type="entry name" value="TRNA DIMETHYLALLYLTRANSFERASE"/>
    <property type="match status" value="1"/>
</dbReference>
<dbReference type="PANTHER" id="PTHR11088:SF60">
    <property type="entry name" value="TRNA DIMETHYLALLYLTRANSFERASE"/>
    <property type="match status" value="1"/>
</dbReference>
<dbReference type="Pfam" id="PF01715">
    <property type="entry name" value="IPPT"/>
    <property type="match status" value="1"/>
</dbReference>
<dbReference type="SUPFAM" id="SSF52540">
    <property type="entry name" value="P-loop containing nucleoside triphosphate hydrolases"/>
    <property type="match status" value="1"/>
</dbReference>
<proteinExistence type="inferred from homology"/>
<gene>
    <name evidence="1" type="primary">miaA</name>
    <name type="ordered locus">Ent638_0354</name>
</gene>
<comment type="function">
    <text evidence="1">Catalyzes the transfer of a dimethylallyl group onto the adenine at position 37 in tRNAs that read codons beginning with uridine, leading to the formation of N6-(dimethylallyl)adenosine (i(6)A).</text>
</comment>
<comment type="catalytic activity">
    <reaction evidence="1">
        <text>adenosine(37) in tRNA + dimethylallyl diphosphate = N(6)-dimethylallyladenosine(37) in tRNA + diphosphate</text>
        <dbReference type="Rhea" id="RHEA:26482"/>
        <dbReference type="Rhea" id="RHEA-COMP:10162"/>
        <dbReference type="Rhea" id="RHEA-COMP:10375"/>
        <dbReference type="ChEBI" id="CHEBI:33019"/>
        <dbReference type="ChEBI" id="CHEBI:57623"/>
        <dbReference type="ChEBI" id="CHEBI:74411"/>
        <dbReference type="ChEBI" id="CHEBI:74415"/>
        <dbReference type="EC" id="2.5.1.75"/>
    </reaction>
</comment>
<comment type="cofactor">
    <cofactor evidence="1">
        <name>Mg(2+)</name>
        <dbReference type="ChEBI" id="CHEBI:18420"/>
    </cofactor>
</comment>
<comment type="subunit">
    <text evidence="1">Monomer.</text>
</comment>
<comment type="similarity">
    <text evidence="1">Belongs to the IPP transferase family.</text>
</comment>